<evidence type="ECO:0000255" key="1">
    <source>
        <dbReference type="HAMAP-Rule" id="MF_00184"/>
    </source>
</evidence>
<evidence type="ECO:0000255" key="2">
    <source>
        <dbReference type="PROSITE-ProRule" id="PRU01228"/>
    </source>
</evidence>
<gene>
    <name evidence="1" type="primary">thrS</name>
    <name type="ordered locus">Pden_0955</name>
</gene>
<proteinExistence type="inferred from homology"/>
<comment type="function">
    <text evidence="1">Catalyzes the attachment of threonine to tRNA(Thr) in a two-step reaction: L-threonine is first activated by ATP to form Thr-AMP and then transferred to the acceptor end of tRNA(Thr). Also edits incorrectly charged L-seryl-tRNA(Thr).</text>
</comment>
<comment type="catalytic activity">
    <reaction evidence="1">
        <text>tRNA(Thr) + L-threonine + ATP = L-threonyl-tRNA(Thr) + AMP + diphosphate + H(+)</text>
        <dbReference type="Rhea" id="RHEA:24624"/>
        <dbReference type="Rhea" id="RHEA-COMP:9670"/>
        <dbReference type="Rhea" id="RHEA-COMP:9704"/>
        <dbReference type="ChEBI" id="CHEBI:15378"/>
        <dbReference type="ChEBI" id="CHEBI:30616"/>
        <dbReference type="ChEBI" id="CHEBI:33019"/>
        <dbReference type="ChEBI" id="CHEBI:57926"/>
        <dbReference type="ChEBI" id="CHEBI:78442"/>
        <dbReference type="ChEBI" id="CHEBI:78534"/>
        <dbReference type="ChEBI" id="CHEBI:456215"/>
        <dbReference type="EC" id="6.1.1.3"/>
    </reaction>
</comment>
<comment type="cofactor">
    <cofactor evidence="1">
        <name>Zn(2+)</name>
        <dbReference type="ChEBI" id="CHEBI:29105"/>
    </cofactor>
    <text evidence="1">Binds 1 zinc ion per subunit.</text>
</comment>
<comment type="subunit">
    <text evidence="1">Homodimer.</text>
</comment>
<comment type="subcellular location">
    <subcellularLocation>
        <location evidence="1">Cytoplasm</location>
    </subcellularLocation>
</comment>
<comment type="similarity">
    <text evidence="1">Belongs to the class-II aminoacyl-tRNA synthetase family.</text>
</comment>
<accession>A1B0M2</accession>
<keyword id="KW-0030">Aminoacyl-tRNA synthetase</keyword>
<keyword id="KW-0067">ATP-binding</keyword>
<keyword id="KW-0963">Cytoplasm</keyword>
<keyword id="KW-0436">Ligase</keyword>
<keyword id="KW-0479">Metal-binding</keyword>
<keyword id="KW-0547">Nucleotide-binding</keyword>
<keyword id="KW-0648">Protein biosynthesis</keyword>
<keyword id="KW-1185">Reference proteome</keyword>
<keyword id="KW-0694">RNA-binding</keyword>
<keyword id="KW-0820">tRNA-binding</keyword>
<keyword id="KW-0862">Zinc</keyword>
<feature type="chain" id="PRO_1000020456" description="Threonine--tRNA ligase">
    <location>
        <begin position="1"/>
        <end position="648"/>
    </location>
</feature>
<feature type="domain" description="TGS" evidence="2">
    <location>
        <begin position="1"/>
        <end position="63"/>
    </location>
</feature>
<feature type="region of interest" description="Catalytic" evidence="1">
    <location>
        <begin position="247"/>
        <end position="544"/>
    </location>
</feature>
<feature type="binding site" evidence="1">
    <location>
        <position position="344"/>
    </location>
    <ligand>
        <name>Zn(2+)</name>
        <dbReference type="ChEBI" id="CHEBI:29105"/>
    </ligand>
</feature>
<feature type="binding site" evidence="1">
    <location>
        <position position="395"/>
    </location>
    <ligand>
        <name>Zn(2+)</name>
        <dbReference type="ChEBI" id="CHEBI:29105"/>
    </ligand>
</feature>
<feature type="binding site" evidence="1">
    <location>
        <position position="521"/>
    </location>
    <ligand>
        <name>Zn(2+)</name>
        <dbReference type="ChEBI" id="CHEBI:29105"/>
    </ligand>
</feature>
<organism>
    <name type="scientific">Paracoccus denitrificans (strain Pd 1222)</name>
    <dbReference type="NCBI Taxonomy" id="318586"/>
    <lineage>
        <taxon>Bacteria</taxon>
        <taxon>Pseudomonadati</taxon>
        <taxon>Pseudomonadota</taxon>
        <taxon>Alphaproteobacteria</taxon>
        <taxon>Rhodobacterales</taxon>
        <taxon>Paracoccaceae</taxon>
        <taxon>Paracoccus</taxon>
    </lineage>
</organism>
<name>SYT_PARDP</name>
<reference key="1">
    <citation type="submission" date="2006-12" db="EMBL/GenBank/DDBJ databases">
        <title>Complete sequence of chromosome 1 of Paracoccus denitrificans PD1222.</title>
        <authorList>
            <person name="Copeland A."/>
            <person name="Lucas S."/>
            <person name="Lapidus A."/>
            <person name="Barry K."/>
            <person name="Detter J.C."/>
            <person name="Glavina del Rio T."/>
            <person name="Hammon N."/>
            <person name="Israni S."/>
            <person name="Dalin E."/>
            <person name="Tice H."/>
            <person name="Pitluck S."/>
            <person name="Munk A.C."/>
            <person name="Brettin T."/>
            <person name="Bruce D."/>
            <person name="Han C."/>
            <person name="Tapia R."/>
            <person name="Gilna P."/>
            <person name="Schmutz J."/>
            <person name="Larimer F."/>
            <person name="Land M."/>
            <person name="Hauser L."/>
            <person name="Kyrpides N."/>
            <person name="Lykidis A."/>
            <person name="Spiro S."/>
            <person name="Richardson D.J."/>
            <person name="Moir J.W.B."/>
            <person name="Ferguson S.J."/>
            <person name="van Spanning R.J.M."/>
            <person name="Richardson P."/>
        </authorList>
    </citation>
    <scope>NUCLEOTIDE SEQUENCE [LARGE SCALE GENOMIC DNA]</scope>
    <source>
        <strain>Pd 1222</strain>
    </source>
</reference>
<dbReference type="EC" id="6.1.1.3" evidence="1"/>
<dbReference type="EMBL" id="CP000489">
    <property type="protein sequence ID" value="ABL69066.1"/>
    <property type="molecule type" value="Genomic_DNA"/>
</dbReference>
<dbReference type="RefSeq" id="WP_011747294.1">
    <property type="nucleotide sequence ID" value="NC_008686.1"/>
</dbReference>
<dbReference type="SMR" id="A1B0M2"/>
<dbReference type="STRING" id="318586.Pden_0955"/>
<dbReference type="EnsemblBacteria" id="ABL69066">
    <property type="protein sequence ID" value="ABL69066"/>
    <property type="gene ID" value="Pden_0955"/>
</dbReference>
<dbReference type="GeneID" id="93452179"/>
<dbReference type="KEGG" id="pde:Pden_0955"/>
<dbReference type="eggNOG" id="COG0441">
    <property type="taxonomic scope" value="Bacteria"/>
</dbReference>
<dbReference type="HOGENOM" id="CLU_008554_0_1_5"/>
<dbReference type="OrthoDB" id="9802304at2"/>
<dbReference type="Proteomes" id="UP000000361">
    <property type="component" value="Chromosome 1"/>
</dbReference>
<dbReference type="GO" id="GO:0005829">
    <property type="term" value="C:cytosol"/>
    <property type="evidence" value="ECO:0007669"/>
    <property type="project" value="TreeGrafter"/>
</dbReference>
<dbReference type="GO" id="GO:0005524">
    <property type="term" value="F:ATP binding"/>
    <property type="evidence" value="ECO:0007669"/>
    <property type="project" value="UniProtKB-UniRule"/>
</dbReference>
<dbReference type="GO" id="GO:0046872">
    <property type="term" value="F:metal ion binding"/>
    <property type="evidence" value="ECO:0007669"/>
    <property type="project" value="UniProtKB-KW"/>
</dbReference>
<dbReference type="GO" id="GO:0004829">
    <property type="term" value="F:threonine-tRNA ligase activity"/>
    <property type="evidence" value="ECO:0007669"/>
    <property type="project" value="UniProtKB-UniRule"/>
</dbReference>
<dbReference type="GO" id="GO:0000049">
    <property type="term" value="F:tRNA binding"/>
    <property type="evidence" value="ECO:0007669"/>
    <property type="project" value="UniProtKB-KW"/>
</dbReference>
<dbReference type="GO" id="GO:0006435">
    <property type="term" value="P:threonyl-tRNA aminoacylation"/>
    <property type="evidence" value="ECO:0007669"/>
    <property type="project" value="UniProtKB-UniRule"/>
</dbReference>
<dbReference type="CDD" id="cd01667">
    <property type="entry name" value="TGS_ThrRS"/>
    <property type="match status" value="1"/>
</dbReference>
<dbReference type="CDD" id="cd00771">
    <property type="entry name" value="ThrRS_core"/>
    <property type="match status" value="1"/>
</dbReference>
<dbReference type="FunFam" id="3.30.54.20:FF:000002">
    <property type="entry name" value="Threonine--tRNA ligase"/>
    <property type="match status" value="1"/>
</dbReference>
<dbReference type="FunFam" id="3.30.930.10:FF:000002">
    <property type="entry name" value="Threonine--tRNA ligase"/>
    <property type="match status" value="1"/>
</dbReference>
<dbReference type="FunFam" id="3.40.50.800:FF:000001">
    <property type="entry name" value="Threonine--tRNA ligase"/>
    <property type="match status" value="1"/>
</dbReference>
<dbReference type="Gene3D" id="3.10.20.30">
    <property type="match status" value="1"/>
</dbReference>
<dbReference type="Gene3D" id="3.30.54.20">
    <property type="match status" value="1"/>
</dbReference>
<dbReference type="Gene3D" id="3.40.50.800">
    <property type="entry name" value="Anticodon-binding domain"/>
    <property type="match status" value="1"/>
</dbReference>
<dbReference type="Gene3D" id="3.30.930.10">
    <property type="entry name" value="Bira Bifunctional Protein, Domain 2"/>
    <property type="match status" value="1"/>
</dbReference>
<dbReference type="Gene3D" id="3.30.980.10">
    <property type="entry name" value="Threonyl-trna Synthetase, Chain A, domain 2"/>
    <property type="match status" value="1"/>
</dbReference>
<dbReference type="HAMAP" id="MF_00184">
    <property type="entry name" value="Thr_tRNA_synth"/>
    <property type="match status" value="1"/>
</dbReference>
<dbReference type="InterPro" id="IPR002314">
    <property type="entry name" value="aa-tRNA-synt_IIb"/>
</dbReference>
<dbReference type="InterPro" id="IPR006195">
    <property type="entry name" value="aa-tRNA-synth_II"/>
</dbReference>
<dbReference type="InterPro" id="IPR045864">
    <property type="entry name" value="aa-tRNA-synth_II/BPL/LPL"/>
</dbReference>
<dbReference type="InterPro" id="IPR004154">
    <property type="entry name" value="Anticodon-bd"/>
</dbReference>
<dbReference type="InterPro" id="IPR036621">
    <property type="entry name" value="Anticodon-bd_dom_sf"/>
</dbReference>
<dbReference type="InterPro" id="IPR012675">
    <property type="entry name" value="Beta-grasp_dom_sf"/>
</dbReference>
<dbReference type="InterPro" id="IPR004095">
    <property type="entry name" value="TGS"/>
</dbReference>
<dbReference type="InterPro" id="IPR012676">
    <property type="entry name" value="TGS-like"/>
</dbReference>
<dbReference type="InterPro" id="IPR002320">
    <property type="entry name" value="Thr-tRNA-ligase_IIa"/>
</dbReference>
<dbReference type="InterPro" id="IPR018163">
    <property type="entry name" value="Thr/Ala-tRNA-synth_IIc_edit"/>
</dbReference>
<dbReference type="InterPro" id="IPR033728">
    <property type="entry name" value="ThrRS_core"/>
</dbReference>
<dbReference type="InterPro" id="IPR012947">
    <property type="entry name" value="tRNA_SAD"/>
</dbReference>
<dbReference type="NCBIfam" id="TIGR00418">
    <property type="entry name" value="thrS"/>
    <property type="match status" value="1"/>
</dbReference>
<dbReference type="PANTHER" id="PTHR11451:SF44">
    <property type="entry name" value="THREONINE--TRNA LIGASE, CHLOROPLASTIC_MITOCHONDRIAL 2"/>
    <property type="match status" value="1"/>
</dbReference>
<dbReference type="PANTHER" id="PTHR11451">
    <property type="entry name" value="THREONINE-TRNA LIGASE"/>
    <property type="match status" value="1"/>
</dbReference>
<dbReference type="Pfam" id="PF03129">
    <property type="entry name" value="HGTP_anticodon"/>
    <property type="match status" value="1"/>
</dbReference>
<dbReference type="Pfam" id="PF02824">
    <property type="entry name" value="TGS"/>
    <property type="match status" value="1"/>
</dbReference>
<dbReference type="Pfam" id="PF00587">
    <property type="entry name" value="tRNA-synt_2b"/>
    <property type="match status" value="1"/>
</dbReference>
<dbReference type="Pfam" id="PF07973">
    <property type="entry name" value="tRNA_SAD"/>
    <property type="match status" value="1"/>
</dbReference>
<dbReference type="PRINTS" id="PR01047">
    <property type="entry name" value="TRNASYNTHTHR"/>
</dbReference>
<dbReference type="SMART" id="SM00863">
    <property type="entry name" value="tRNA_SAD"/>
    <property type="match status" value="1"/>
</dbReference>
<dbReference type="SUPFAM" id="SSF52954">
    <property type="entry name" value="Class II aaRS ABD-related"/>
    <property type="match status" value="1"/>
</dbReference>
<dbReference type="SUPFAM" id="SSF55681">
    <property type="entry name" value="Class II aaRS and biotin synthetases"/>
    <property type="match status" value="1"/>
</dbReference>
<dbReference type="SUPFAM" id="SSF81271">
    <property type="entry name" value="TGS-like"/>
    <property type="match status" value="1"/>
</dbReference>
<dbReference type="SUPFAM" id="SSF55186">
    <property type="entry name" value="ThrRS/AlaRS common domain"/>
    <property type="match status" value="1"/>
</dbReference>
<dbReference type="PROSITE" id="PS50862">
    <property type="entry name" value="AA_TRNA_LIGASE_II"/>
    <property type="match status" value="1"/>
</dbReference>
<dbReference type="PROSITE" id="PS51880">
    <property type="entry name" value="TGS"/>
    <property type="match status" value="1"/>
</dbReference>
<protein>
    <recommendedName>
        <fullName evidence="1">Threonine--tRNA ligase</fullName>
        <ecNumber evidence="1">6.1.1.3</ecNumber>
    </recommendedName>
    <alternativeName>
        <fullName evidence="1">Threonyl-tRNA synthetase</fullName>
        <shortName evidence="1">ThrRS</shortName>
    </alternativeName>
</protein>
<sequence>MSQISLTFPDGNARDYPAGVTAAEVAASIAPSLAKNAISASLDGQHIDLQWPIAASGRIAINTMKDSEPALELIRHDLAHIMARAVQELWPDVKVTIGPVRDQGWFYDFDRAEPFTPEDLGAIEQRMKQIIAARDPVRTEVWDRDRARAHYEAQGEPFKIELLDRIPEGEPIRMYWHGDWQDLCRGPHLQHTGQVPADAFKLTHVAGAYWLGDASRPMLQRIYGVAFRNRDDLKAHLTMLEEAAKRDHRKLGREMELFHFQEEAPGMVFWHPNGWSIYRELEAYMRRRLIRADYKEIKTPQVVDRILWEKSGHWEAYRENMFIVEVDEEGAKEKRINALKPMNCPCHVQVYNQGLKSYRDLPLRLAEFGSCHRYEPSGSMHGLMRVRGFVQDDAHIFCTEDQIEAECAGFIGLLSSVYKDLGFEKFDIKLSTRPDVRVGSDEIWDKAEAALKGAIEHLDLPYEVNPGDGAFYGPKLDFKLTDAIGREWQCGTFQCDFNLPQRLEAEYVGEDGAKHMPVMLHRAVLGSFERFIGILIENYSGKLPLWLAPRQVVVASIVSGADDYVHEVVAALRAAGLRAEADTRNEKINYKVREHSVGKVPVIMAVGLKEVEERSVSIRRLDRQGSESHGLESAIATLRAEATPPDLR</sequence>